<accession>A2RFC4</accession>
<organism>
    <name type="scientific">Streptococcus pyogenes serotype M5 (strain Manfredo)</name>
    <dbReference type="NCBI Taxonomy" id="160491"/>
    <lineage>
        <taxon>Bacteria</taxon>
        <taxon>Bacillati</taxon>
        <taxon>Bacillota</taxon>
        <taxon>Bacilli</taxon>
        <taxon>Lactobacillales</taxon>
        <taxon>Streptococcaceae</taxon>
        <taxon>Streptococcus</taxon>
    </lineage>
</organism>
<gene>
    <name evidence="1" type="primary">atpA</name>
    <name type="ordered locus">SpyM51229</name>
</gene>
<dbReference type="EC" id="7.1.2.2" evidence="1"/>
<dbReference type="EMBL" id="AM295007">
    <property type="protein sequence ID" value="CAM30553.1"/>
    <property type="molecule type" value="Genomic_DNA"/>
</dbReference>
<dbReference type="RefSeq" id="WP_011889023.1">
    <property type="nucleotide sequence ID" value="NC_009332.1"/>
</dbReference>
<dbReference type="SMR" id="A2RFC4"/>
<dbReference type="KEGG" id="spf:SpyM51229"/>
<dbReference type="HOGENOM" id="CLU_010091_2_1_9"/>
<dbReference type="GO" id="GO:0005886">
    <property type="term" value="C:plasma membrane"/>
    <property type="evidence" value="ECO:0007669"/>
    <property type="project" value="UniProtKB-SubCell"/>
</dbReference>
<dbReference type="GO" id="GO:0045259">
    <property type="term" value="C:proton-transporting ATP synthase complex"/>
    <property type="evidence" value="ECO:0007669"/>
    <property type="project" value="UniProtKB-KW"/>
</dbReference>
<dbReference type="GO" id="GO:0043531">
    <property type="term" value="F:ADP binding"/>
    <property type="evidence" value="ECO:0007669"/>
    <property type="project" value="TreeGrafter"/>
</dbReference>
<dbReference type="GO" id="GO:0005524">
    <property type="term" value="F:ATP binding"/>
    <property type="evidence" value="ECO:0007669"/>
    <property type="project" value="UniProtKB-UniRule"/>
</dbReference>
<dbReference type="GO" id="GO:0046933">
    <property type="term" value="F:proton-transporting ATP synthase activity, rotational mechanism"/>
    <property type="evidence" value="ECO:0007669"/>
    <property type="project" value="UniProtKB-UniRule"/>
</dbReference>
<dbReference type="CDD" id="cd18113">
    <property type="entry name" value="ATP-synt_F1_alpha_C"/>
    <property type="match status" value="1"/>
</dbReference>
<dbReference type="CDD" id="cd18116">
    <property type="entry name" value="ATP-synt_F1_alpha_N"/>
    <property type="match status" value="1"/>
</dbReference>
<dbReference type="CDD" id="cd01132">
    <property type="entry name" value="F1-ATPase_alpha_CD"/>
    <property type="match status" value="1"/>
</dbReference>
<dbReference type="FunFam" id="1.20.150.20:FF:000001">
    <property type="entry name" value="ATP synthase subunit alpha"/>
    <property type="match status" value="1"/>
</dbReference>
<dbReference type="FunFam" id="2.40.30.20:FF:000001">
    <property type="entry name" value="ATP synthase subunit alpha"/>
    <property type="match status" value="1"/>
</dbReference>
<dbReference type="FunFam" id="3.40.50.300:FF:000002">
    <property type="entry name" value="ATP synthase subunit alpha"/>
    <property type="match status" value="1"/>
</dbReference>
<dbReference type="Gene3D" id="2.40.30.20">
    <property type="match status" value="1"/>
</dbReference>
<dbReference type="Gene3D" id="1.20.150.20">
    <property type="entry name" value="ATP synthase alpha/beta chain, C-terminal domain"/>
    <property type="match status" value="1"/>
</dbReference>
<dbReference type="Gene3D" id="3.40.50.300">
    <property type="entry name" value="P-loop containing nucleotide triphosphate hydrolases"/>
    <property type="match status" value="1"/>
</dbReference>
<dbReference type="HAMAP" id="MF_01346">
    <property type="entry name" value="ATP_synth_alpha_bact"/>
    <property type="match status" value="1"/>
</dbReference>
<dbReference type="InterPro" id="IPR023366">
    <property type="entry name" value="ATP_synth_asu-like_sf"/>
</dbReference>
<dbReference type="InterPro" id="IPR000793">
    <property type="entry name" value="ATP_synth_asu_C"/>
</dbReference>
<dbReference type="InterPro" id="IPR038376">
    <property type="entry name" value="ATP_synth_asu_C_sf"/>
</dbReference>
<dbReference type="InterPro" id="IPR033732">
    <property type="entry name" value="ATP_synth_F1_a_nt-bd_dom"/>
</dbReference>
<dbReference type="InterPro" id="IPR005294">
    <property type="entry name" value="ATP_synth_F1_asu"/>
</dbReference>
<dbReference type="InterPro" id="IPR004100">
    <property type="entry name" value="ATPase_F1/V1/A1_a/bsu_N"/>
</dbReference>
<dbReference type="InterPro" id="IPR036121">
    <property type="entry name" value="ATPase_F1/V1/A1_a/bsu_N_sf"/>
</dbReference>
<dbReference type="InterPro" id="IPR000194">
    <property type="entry name" value="ATPase_F1/V1/A1_a/bsu_nucl-bd"/>
</dbReference>
<dbReference type="InterPro" id="IPR027417">
    <property type="entry name" value="P-loop_NTPase"/>
</dbReference>
<dbReference type="NCBIfam" id="TIGR00962">
    <property type="entry name" value="atpA"/>
    <property type="match status" value="1"/>
</dbReference>
<dbReference type="NCBIfam" id="NF009884">
    <property type="entry name" value="PRK13343.1"/>
    <property type="match status" value="1"/>
</dbReference>
<dbReference type="PANTHER" id="PTHR48082">
    <property type="entry name" value="ATP SYNTHASE SUBUNIT ALPHA, MITOCHONDRIAL"/>
    <property type="match status" value="1"/>
</dbReference>
<dbReference type="PANTHER" id="PTHR48082:SF2">
    <property type="entry name" value="ATP SYNTHASE SUBUNIT ALPHA, MITOCHONDRIAL"/>
    <property type="match status" value="1"/>
</dbReference>
<dbReference type="Pfam" id="PF00006">
    <property type="entry name" value="ATP-synt_ab"/>
    <property type="match status" value="1"/>
</dbReference>
<dbReference type="Pfam" id="PF00306">
    <property type="entry name" value="ATP-synt_ab_C"/>
    <property type="match status" value="1"/>
</dbReference>
<dbReference type="Pfam" id="PF02874">
    <property type="entry name" value="ATP-synt_ab_N"/>
    <property type="match status" value="1"/>
</dbReference>
<dbReference type="PIRSF" id="PIRSF039088">
    <property type="entry name" value="F_ATPase_subunit_alpha"/>
    <property type="match status" value="1"/>
</dbReference>
<dbReference type="SUPFAM" id="SSF47917">
    <property type="entry name" value="C-terminal domain of alpha and beta subunits of F1 ATP synthase"/>
    <property type="match status" value="1"/>
</dbReference>
<dbReference type="SUPFAM" id="SSF50615">
    <property type="entry name" value="N-terminal domain of alpha and beta subunits of F1 ATP synthase"/>
    <property type="match status" value="1"/>
</dbReference>
<dbReference type="SUPFAM" id="SSF52540">
    <property type="entry name" value="P-loop containing nucleoside triphosphate hydrolases"/>
    <property type="match status" value="1"/>
</dbReference>
<proteinExistence type="inferred from homology"/>
<reference key="1">
    <citation type="journal article" date="2007" name="J. Bacteriol.">
        <title>Complete genome of acute rheumatic fever-associated serotype M5 Streptococcus pyogenes strain Manfredo.</title>
        <authorList>
            <person name="Holden M.T.G."/>
            <person name="Scott A."/>
            <person name="Cherevach I."/>
            <person name="Chillingworth T."/>
            <person name="Churcher C."/>
            <person name="Cronin A."/>
            <person name="Dowd L."/>
            <person name="Feltwell T."/>
            <person name="Hamlin N."/>
            <person name="Holroyd S."/>
            <person name="Jagels K."/>
            <person name="Moule S."/>
            <person name="Mungall K."/>
            <person name="Quail M.A."/>
            <person name="Price C."/>
            <person name="Rabbinowitsch E."/>
            <person name="Sharp S."/>
            <person name="Skelton J."/>
            <person name="Whitehead S."/>
            <person name="Barrell B.G."/>
            <person name="Kehoe M."/>
            <person name="Parkhill J."/>
        </authorList>
    </citation>
    <scope>NUCLEOTIDE SEQUENCE [LARGE SCALE GENOMIC DNA]</scope>
    <source>
        <strain>Manfredo</strain>
    </source>
</reference>
<keyword id="KW-0066">ATP synthesis</keyword>
<keyword id="KW-0067">ATP-binding</keyword>
<keyword id="KW-1003">Cell membrane</keyword>
<keyword id="KW-0139">CF(1)</keyword>
<keyword id="KW-0375">Hydrogen ion transport</keyword>
<keyword id="KW-0406">Ion transport</keyword>
<keyword id="KW-0472">Membrane</keyword>
<keyword id="KW-0547">Nucleotide-binding</keyword>
<keyword id="KW-1278">Translocase</keyword>
<keyword id="KW-0813">Transport</keyword>
<name>ATPA_STRPG</name>
<evidence type="ECO:0000255" key="1">
    <source>
        <dbReference type="HAMAP-Rule" id="MF_01346"/>
    </source>
</evidence>
<sequence length="501" mass="54619">MAINAQEISALIKKQIENFQPNFDVTETGIVTYIGDGIARARGLDNAMSGELLEFENGAYGMAQNLESNDVGIIILGDFSAIREGDVVKRTGKIMEVPVGEALIGRVVNPLGQPVDGLGDIETTGFRPVETPAPGVMQRKSVSEPLQTGLKAIDALVPIGRGQRELIIGDRQTGKTSVAIDAILNQKGQDMICIYVAIGQKESTVRTQVETLRRYGALDYTIVVTASASQPSPLLFIAPYAGVAMAEEFMYQGKHVLIVYDDLSKQAVAYRELSLLLRRPPGREAYPGDVFYLHSRLLERSAKVSDDLGGGSITALPFIETQAGDISAYIATNVISITDGQIFLQENLFNSGIRPAIDAGSSVSRVGGSAQIKAMKKVAGTLRLDLASYRELEAFTQFGSDLDAATQAKLNRGRRTVEILKQPLHKPLPVEKQVVILYALTHGFLDDVPVDDILAFEEALYDYFDVHYDNLFETIRTTKDLPEEADLDAAIKAFKDQSNFK</sequence>
<feature type="chain" id="PRO_0000302706" description="ATP synthase subunit alpha">
    <location>
        <begin position="1"/>
        <end position="501"/>
    </location>
</feature>
<feature type="binding site" evidence="1">
    <location>
        <begin position="169"/>
        <end position="176"/>
    </location>
    <ligand>
        <name>ATP</name>
        <dbReference type="ChEBI" id="CHEBI:30616"/>
    </ligand>
</feature>
<feature type="site" description="Required for activity" evidence="1">
    <location>
        <position position="362"/>
    </location>
</feature>
<comment type="function">
    <text evidence="1">Produces ATP from ADP in the presence of a proton gradient across the membrane. The alpha chain is a regulatory subunit.</text>
</comment>
<comment type="catalytic activity">
    <reaction evidence="1">
        <text>ATP + H2O + 4 H(+)(in) = ADP + phosphate + 5 H(+)(out)</text>
        <dbReference type="Rhea" id="RHEA:57720"/>
        <dbReference type="ChEBI" id="CHEBI:15377"/>
        <dbReference type="ChEBI" id="CHEBI:15378"/>
        <dbReference type="ChEBI" id="CHEBI:30616"/>
        <dbReference type="ChEBI" id="CHEBI:43474"/>
        <dbReference type="ChEBI" id="CHEBI:456216"/>
        <dbReference type="EC" id="7.1.2.2"/>
    </reaction>
</comment>
<comment type="subunit">
    <text evidence="1">F-type ATPases have 2 components, CF(1) - the catalytic core - and CF(0) - the membrane proton channel. CF(1) has five subunits: alpha(3), beta(3), gamma(1), delta(1), epsilon(1). CF(0) has three main subunits: a(1), b(2) and c(9-12). The alpha and beta chains form an alternating ring which encloses part of the gamma chain. CF(1) is attached to CF(0) by a central stalk formed by the gamma and epsilon chains, while a peripheral stalk is formed by the delta and b chains.</text>
</comment>
<comment type="subcellular location">
    <subcellularLocation>
        <location evidence="1">Cell membrane</location>
        <topology evidence="1">Peripheral membrane protein</topology>
    </subcellularLocation>
</comment>
<comment type="similarity">
    <text evidence="1">Belongs to the ATPase alpha/beta chains family.</text>
</comment>
<protein>
    <recommendedName>
        <fullName evidence="1">ATP synthase subunit alpha</fullName>
        <ecNumber evidence="1">7.1.2.2</ecNumber>
    </recommendedName>
    <alternativeName>
        <fullName evidence="1">ATP synthase F1 sector subunit alpha</fullName>
    </alternativeName>
    <alternativeName>
        <fullName evidence="1">F-ATPase subunit alpha</fullName>
    </alternativeName>
</protein>